<proteinExistence type="evidence at protein level"/>
<keyword id="KW-0903">Direct protein sequencing</keyword>
<keyword id="KW-0346">Stress response</keyword>
<feature type="chain" id="PRO_0000055556" description="Unknown protein from 2D-PAGE of needles">
    <location>
        <begin position="1" status="less than"/>
        <end position="15" status="greater than"/>
    </location>
</feature>
<feature type="non-terminal residue">
    <location>
        <position position="1"/>
    </location>
</feature>
<feature type="non-terminal residue">
    <location>
        <position position="15"/>
    </location>
</feature>
<name>UN04_PINPS</name>
<sequence length="15" mass="1489">KKIEEEAAAAGATAE</sequence>
<organism>
    <name type="scientific">Pinus pinaster</name>
    <name type="common">Maritime pine</name>
    <dbReference type="NCBI Taxonomy" id="71647"/>
    <lineage>
        <taxon>Eukaryota</taxon>
        <taxon>Viridiplantae</taxon>
        <taxon>Streptophyta</taxon>
        <taxon>Embryophyta</taxon>
        <taxon>Tracheophyta</taxon>
        <taxon>Spermatophyta</taxon>
        <taxon>Pinopsida</taxon>
        <taxon>Pinidae</taxon>
        <taxon>Conifers I</taxon>
        <taxon>Pinales</taxon>
        <taxon>Pinaceae</taxon>
        <taxon>Pinus</taxon>
        <taxon>Pinus subgen. Pinus</taxon>
    </lineage>
</organism>
<reference key="1">
    <citation type="journal article" date="1999" name="Electrophoresis">
        <title>Separation and characterization of needle and xylem maritime pine proteins.</title>
        <authorList>
            <person name="Costa P."/>
            <person name="Pionneau C."/>
            <person name="Bauw G."/>
            <person name="Dubos C."/>
            <person name="Bahrman N."/>
            <person name="Kremer A."/>
            <person name="Frigerio J.-M."/>
            <person name="Plomion C."/>
        </authorList>
    </citation>
    <scope>PROTEIN SEQUENCE</scope>
    <source>
        <tissue>Needle</tissue>
    </source>
</reference>
<accession>P81673</accession>
<comment type="induction">
    <text>By water stress.</text>
</comment>
<comment type="miscellaneous">
    <text>On the 2D-gel the determined pI of this unknown protein is: 6.2, its MW is: 21 kDa.</text>
</comment>
<protein>
    <recommendedName>
        <fullName>Unknown protein from 2D-PAGE of needles</fullName>
    </recommendedName>
    <alternativeName>
        <fullName>N143</fullName>
    </alternativeName>
</protein>